<protein>
    <recommendedName>
        <fullName>NAD(P) transhydrogenase subunit beta</fullName>
        <ecNumber>7.1.1.1</ecNumber>
    </recommendedName>
    <alternativeName>
        <fullName>Nicotinamide nucleotide transhydrogenase subunit beta</fullName>
    </alternativeName>
    <alternativeName>
        <fullName>Pyridine nucleotide transhydrogenase subunit beta</fullName>
    </alternativeName>
</protein>
<organism>
    <name type="scientific">Escherichia coli O6:H1 (strain CFT073 / ATCC 700928 / UPEC)</name>
    <dbReference type="NCBI Taxonomy" id="199310"/>
    <lineage>
        <taxon>Bacteria</taxon>
        <taxon>Pseudomonadati</taxon>
        <taxon>Pseudomonadota</taxon>
        <taxon>Gammaproteobacteria</taxon>
        <taxon>Enterobacterales</taxon>
        <taxon>Enterobacteriaceae</taxon>
        <taxon>Escherichia</taxon>
    </lineage>
</organism>
<keyword id="KW-0997">Cell inner membrane</keyword>
<keyword id="KW-1003">Cell membrane</keyword>
<keyword id="KW-0472">Membrane</keyword>
<keyword id="KW-0520">NAD</keyword>
<keyword id="KW-0521">NADP</keyword>
<keyword id="KW-1185">Reference proteome</keyword>
<keyword id="KW-1278">Translocase</keyword>
<keyword id="KW-0812">Transmembrane</keyword>
<keyword id="KW-1133">Transmembrane helix</keyword>
<reference key="1">
    <citation type="journal article" date="2002" name="Proc. Natl. Acad. Sci. U.S.A.">
        <title>Extensive mosaic structure revealed by the complete genome sequence of uropathogenic Escherichia coli.</title>
        <authorList>
            <person name="Welch R.A."/>
            <person name="Burland V."/>
            <person name="Plunkett G. III"/>
            <person name="Redford P."/>
            <person name="Roesch P."/>
            <person name="Rasko D."/>
            <person name="Buckles E.L."/>
            <person name="Liou S.-R."/>
            <person name="Boutin A."/>
            <person name="Hackett J."/>
            <person name="Stroud D."/>
            <person name="Mayhew G.F."/>
            <person name="Rose D.J."/>
            <person name="Zhou S."/>
            <person name="Schwartz D.C."/>
            <person name="Perna N.T."/>
            <person name="Mobley H.L.T."/>
            <person name="Donnenberg M.S."/>
            <person name="Blattner F.R."/>
        </authorList>
    </citation>
    <scope>NUCLEOTIDE SEQUENCE [LARGE SCALE GENOMIC DNA]</scope>
    <source>
        <strain>CFT073 / ATCC 700928 / UPEC</strain>
    </source>
</reference>
<feature type="chain" id="PRO_0000199025" description="NAD(P) transhydrogenase subunit beta">
    <location>
        <begin position="1"/>
        <end position="462"/>
    </location>
</feature>
<feature type="topological domain" description="Periplasmic" evidence="2">
    <location>
        <begin position="1"/>
        <end position="3"/>
    </location>
</feature>
<feature type="transmembrane region" description="Helical" evidence="2">
    <location>
        <begin position="4"/>
        <end position="24"/>
    </location>
</feature>
<feature type="topological domain" description="Cytoplasmic" evidence="2">
    <location>
        <begin position="25"/>
        <end position="45"/>
    </location>
</feature>
<feature type="transmembrane region" description="Helical" evidence="2">
    <location>
        <begin position="46"/>
        <end position="66"/>
    </location>
</feature>
<feature type="topological domain" description="Periplasmic" evidence="2">
    <location>
        <begin position="67"/>
        <end position="82"/>
    </location>
</feature>
<feature type="transmembrane region" description="Helical" evidence="2">
    <location>
        <begin position="83"/>
        <end position="103"/>
    </location>
</feature>
<feature type="topological domain" description="Cytoplasmic" evidence="2">
    <location>
        <begin position="104"/>
        <end position="115"/>
    </location>
</feature>
<feature type="transmembrane region" description="Helical" evidence="2">
    <location>
        <begin position="116"/>
        <end position="136"/>
    </location>
</feature>
<feature type="topological domain" description="Periplasmic" evidence="2">
    <location>
        <begin position="137"/>
        <end position="164"/>
    </location>
</feature>
<feature type="transmembrane region" description="Helical" evidence="2">
    <location>
        <begin position="165"/>
        <end position="185"/>
    </location>
</feature>
<feature type="topological domain" description="Cytoplasmic" evidence="2">
    <location>
        <begin position="186"/>
        <end position="188"/>
    </location>
</feature>
<feature type="transmembrane region" description="Helical" evidence="2">
    <location>
        <begin position="189"/>
        <end position="209"/>
    </location>
</feature>
<feature type="topological domain" description="Periplasmic" evidence="2">
    <location>
        <begin position="210"/>
        <end position="215"/>
    </location>
</feature>
<feature type="transmembrane region" description="Helical" evidence="2">
    <location>
        <begin position="216"/>
        <end position="236"/>
    </location>
</feature>
<feature type="topological domain" description="Cytoplasmic" evidence="2">
    <location>
        <begin position="237"/>
        <end position="239"/>
    </location>
</feature>
<feature type="transmembrane region" description="Helical" evidence="2">
    <location>
        <begin position="240"/>
        <end position="260"/>
    </location>
</feature>
<feature type="topological domain" description="Periplasmic" evidence="2">
    <location>
        <begin position="261"/>
        <end position="308"/>
    </location>
</feature>
<feature type="transmembrane region" description="Helical" evidence="2">
    <location>
        <begin position="309"/>
        <end position="329"/>
    </location>
</feature>
<feature type="topological domain" description="Cytoplasmic" evidence="2">
    <location>
        <begin position="330"/>
        <end position="462"/>
    </location>
</feature>
<comment type="function">
    <text evidence="1">The transhydrogenation between NADH and NADP is coupled to respiration and ATP hydrolysis and functions as a proton pump across the membrane.</text>
</comment>
<comment type="catalytic activity">
    <reaction>
        <text>NAD(+) + NADPH + H(+)(in) = NADH + NADP(+) + H(+)(out)</text>
        <dbReference type="Rhea" id="RHEA:47992"/>
        <dbReference type="ChEBI" id="CHEBI:15378"/>
        <dbReference type="ChEBI" id="CHEBI:57540"/>
        <dbReference type="ChEBI" id="CHEBI:57783"/>
        <dbReference type="ChEBI" id="CHEBI:57945"/>
        <dbReference type="ChEBI" id="CHEBI:58349"/>
        <dbReference type="EC" id="7.1.1.1"/>
    </reaction>
</comment>
<comment type="subunit">
    <text evidence="1">Heterodimer of an alpha and a beta chain.</text>
</comment>
<comment type="subcellular location">
    <subcellularLocation>
        <location evidence="1">Cell inner membrane</location>
        <topology evidence="1">Multi-pass membrane protein</topology>
    </subcellularLocation>
</comment>
<comment type="similarity">
    <text evidence="3">Belongs to the PNT beta subunit family.</text>
</comment>
<gene>
    <name type="primary">pntB</name>
    <name type="ordered locus">c1994</name>
</gene>
<dbReference type="EC" id="7.1.1.1"/>
<dbReference type="EMBL" id="AE014075">
    <property type="protein sequence ID" value="AAN80454.1"/>
    <property type="molecule type" value="Genomic_DNA"/>
</dbReference>
<dbReference type="RefSeq" id="WP_000014036.1">
    <property type="nucleotide sequence ID" value="NZ_CP051263.1"/>
</dbReference>
<dbReference type="BMRB" id="P0AB68"/>
<dbReference type="SMR" id="P0AB68"/>
<dbReference type="STRING" id="199310.c1994"/>
<dbReference type="GeneID" id="93775750"/>
<dbReference type="KEGG" id="ecc:c1994"/>
<dbReference type="eggNOG" id="COG1282">
    <property type="taxonomic scope" value="Bacteria"/>
</dbReference>
<dbReference type="HOGENOM" id="CLU_007866_4_0_6"/>
<dbReference type="BioCyc" id="ECOL199310:C1994-MONOMER"/>
<dbReference type="Proteomes" id="UP000001410">
    <property type="component" value="Chromosome"/>
</dbReference>
<dbReference type="GO" id="GO:0005886">
    <property type="term" value="C:plasma membrane"/>
    <property type="evidence" value="ECO:0007669"/>
    <property type="project" value="UniProtKB-SubCell"/>
</dbReference>
<dbReference type="GO" id="GO:0050661">
    <property type="term" value="F:NADP binding"/>
    <property type="evidence" value="ECO:0007669"/>
    <property type="project" value="InterPro"/>
</dbReference>
<dbReference type="GO" id="GO:0008750">
    <property type="term" value="F:proton-translocating NAD(P)+ transhydrogenase activity"/>
    <property type="evidence" value="ECO:0007669"/>
    <property type="project" value="UniProtKB-EC"/>
</dbReference>
<dbReference type="FunFam" id="3.40.50.1220:FF:000002">
    <property type="entry name" value="NAD(P) transhydrogenase subunit beta"/>
    <property type="match status" value="1"/>
</dbReference>
<dbReference type="Gene3D" id="3.40.50.1220">
    <property type="entry name" value="TPP-binding domain"/>
    <property type="match status" value="1"/>
</dbReference>
<dbReference type="InterPro" id="IPR029035">
    <property type="entry name" value="DHS-like_NAD/FAD-binding_dom"/>
</dbReference>
<dbReference type="InterPro" id="IPR012136">
    <property type="entry name" value="NADH_DH_b"/>
</dbReference>
<dbReference type="InterPro" id="IPR034300">
    <property type="entry name" value="PNTB-like"/>
</dbReference>
<dbReference type="NCBIfam" id="NF006974">
    <property type="entry name" value="PRK09444.1"/>
    <property type="match status" value="1"/>
</dbReference>
<dbReference type="PANTHER" id="PTHR44758">
    <property type="entry name" value="NAD(P) TRANSHYDROGENASE SUBUNIT BETA"/>
    <property type="match status" value="1"/>
</dbReference>
<dbReference type="PANTHER" id="PTHR44758:SF1">
    <property type="entry name" value="NAD(P) TRANSHYDROGENASE SUBUNIT BETA"/>
    <property type="match status" value="1"/>
</dbReference>
<dbReference type="Pfam" id="PF02233">
    <property type="entry name" value="PNTB"/>
    <property type="match status" value="1"/>
</dbReference>
<dbReference type="PIRSF" id="PIRSF000204">
    <property type="entry name" value="PNTB"/>
    <property type="match status" value="1"/>
</dbReference>
<dbReference type="SUPFAM" id="SSF52467">
    <property type="entry name" value="DHS-like NAD/FAD-binding domain"/>
    <property type="match status" value="1"/>
</dbReference>
<evidence type="ECO:0000250" key="1"/>
<evidence type="ECO:0000255" key="2"/>
<evidence type="ECO:0000305" key="3"/>
<sequence>MSGGLVTAAYIVAAILFIFSLAGLSKHETSRQGNNFGIAGMAIALIATIFGPDTGNVGWILLAMVIGGAIGIRLAKKVEMTEMPELVAILHSFVGLAAVLVGFNSYLHHDAGMAPILVNIHLTEVFLGIFIGAVTFTGSVVAFGKLCGKISSKPLMLPNRHKMNLAALVVSFLLLIVFVRTDSVGLQVLALLIMTAIALVFGWHLVASIGGADMPVVVSMLNSYSGWAAAAAGFMLSNDLLIVTGALVGSSGAILSYIMCKAMNRSFISVIAGGFGTDGSSTGDDQEVGEHREITAEETAELLKNSHSVIITPGYGMAVAQAQYPVAEITEKLRARGINVRFGIHPVAGRLPGHMNVLLAEAKVPYDIVLEMDEINDDFADTDTVLVIGANDTVNPAAQDDPKSPIAGMPVLEVWKAQNVIVFKRSMNTGYAGVQNPLFFKENTHMLFGDAKASVDAILKAL</sequence>
<accession>P0AB68</accession>
<accession>P07002</accession>
<accession>P76890</accession>
<proteinExistence type="inferred from homology"/>
<name>PNTB_ECOL6</name>